<evidence type="ECO:0000250" key="1"/>
<evidence type="ECO:0000255" key="2">
    <source>
        <dbReference type="HAMAP-Rule" id="MF_01356"/>
    </source>
</evidence>
<evidence type="ECO:0000305" key="3"/>
<gene>
    <name evidence="2" type="primary">nuoB</name>
    <name type="ordered locus">BceJ2315_23030</name>
    <name type="ORF">BCAL2343</name>
</gene>
<organism>
    <name type="scientific">Burkholderia cenocepacia (strain ATCC BAA-245 / DSM 16553 / LMG 16656 / NCTC 13227 / J2315 / CF5610)</name>
    <name type="common">Burkholderia cepacia (strain J2315)</name>
    <dbReference type="NCBI Taxonomy" id="216591"/>
    <lineage>
        <taxon>Bacteria</taxon>
        <taxon>Pseudomonadati</taxon>
        <taxon>Pseudomonadota</taxon>
        <taxon>Betaproteobacteria</taxon>
        <taxon>Burkholderiales</taxon>
        <taxon>Burkholderiaceae</taxon>
        <taxon>Burkholderia</taxon>
        <taxon>Burkholderia cepacia complex</taxon>
    </lineage>
</organism>
<keyword id="KW-0004">4Fe-4S</keyword>
<keyword id="KW-0997">Cell inner membrane</keyword>
<keyword id="KW-1003">Cell membrane</keyword>
<keyword id="KW-0408">Iron</keyword>
<keyword id="KW-0411">Iron-sulfur</keyword>
<keyword id="KW-0472">Membrane</keyword>
<keyword id="KW-0479">Metal-binding</keyword>
<keyword id="KW-0520">NAD</keyword>
<keyword id="KW-0874">Quinone</keyword>
<keyword id="KW-1278">Translocase</keyword>
<keyword id="KW-0813">Transport</keyword>
<keyword id="KW-0830">Ubiquinone</keyword>
<comment type="function">
    <text evidence="1">NDH-1 shuttles electrons from NADH, via FMN and iron-sulfur (Fe-S) centers, to quinones in the respiratory chain. Couples the redox reaction to proton translocation (for every two electrons transferred, four hydrogen ions are translocated across the cytoplasmic membrane), and thus conserves the redox energy in a proton gradient (By similarity).</text>
</comment>
<comment type="catalytic activity">
    <reaction evidence="2">
        <text>a quinone + NADH + 5 H(+)(in) = a quinol + NAD(+) + 4 H(+)(out)</text>
        <dbReference type="Rhea" id="RHEA:57888"/>
        <dbReference type="ChEBI" id="CHEBI:15378"/>
        <dbReference type="ChEBI" id="CHEBI:24646"/>
        <dbReference type="ChEBI" id="CHEBI:57540"/>
        <dbReference type="ChEBI" id="CHEBI:57945"/>
        <dbReference type="ChEBI" id="CHEBI:132124"/>
    </reaction>
</comment>
<comment type="cofactor">
    <cofactor evidence="2">
        <name>[4Fe-4S] cluster</name>
        <dbReference type="ChEBI" id="CHEBI:49883"/>
    </cofactor>
    <text evidence="2">Binds 1 [4Fe-4S] cluster.</text>
</comment>
<comment type="subunit">
    <text evidence="2">NDH-1 is composed of 14 different subunits. Subunits NuoB, C, D, E, F, and G constitute the peripheral sector of the complex.</text>
</comment>
<comment type="subcellular location">
    <subcellularLocation>
        <location evidence="2">Cell inner membrane</location>
        <topology evidence="2">Peripheral membrane protein</topology>
        <orientation evidence="2">Cytoplasmic side</orientation>
    </subcellularLocation>
</comment>
<comment type="similarity">
    <text evidence="2">Belongs to the complex I 20 kDa subunit family.</text>
</comment>
<comment type="sequence caution" evidence="3">
    <conflict type="erroneous initiation">
        <sequence resource="EMBL-CDS" id="CAR52644"/>
    </conflict>
</comment>
<dbReference type="EC" id="7.1.1.-" evidence="2"/>
<dbReference type="EMBL" id="AM747720">
    <property type="protein sequence ID" value="CAR52644.1"/>
    <property type="status" value="ALT_INIT"/>
    <property type="molecule type" value="Genomic_DNA"/>
</dbReference>
<dbReference type="RefSeq" id="WP_006398799.1">
    <property type="nucleotide sequence ID" value="NC_011000.1"/>
</dbReference>
<dbReference type="SMR" id="B4E5M1"/>
<dbReference type="KEGG" id="bcj:BCAL2343"/>
<dbReference type="eggNOG" id="COG0377">
    <property type="taxonomic scope" value="Bacteria"/>
</dbReference>
<dbReference type="HOGENOM" id="CLU_055737_7_3_4"/>
<dbReference type="Proteomes" id="UP000001035">
    <property type="component" value="Chromosome 1"/>
</dbReference>
<dbReference type="GO" id="GO:0005886">
    <property type="term" value="C:plasma membrane"/>
    <property type="evidence" value="ECO:0007669"/>
    <property type="project" value="UniProtKB-SubCell"/>
</dbReference>
<dbReference type="GO" id="GO:0045271">
    <property type="term" value="C:respiratory chain complex I"/>
    <property type="evidence" value="ECO:0007669"/>
    <property type="project" value="TreeGrafter"/>
</dbReference>
<dbReference type="GO" id="GO:0051539">
    <property type="term" value="F:4 iron, 4 sulfur cluster binding"/>
    <property type="evidence" value="ECO:0007669"/>
    <property type="project" value="UniProtKB-KW"/>
</dbReference>
<dbReference type="GO" id="GO:0005506">
    <property type="term" value="F:iron ion binding"/>
    <property type="evidence" value="ECO:0007669"/>
    <property type="project" value="UniProtKB-UniRule"/>
</dbReference>
<dbReference type="GO" id="GO:0008137">
    <property type="term" value="F:NADH dehydrogenase (ubiquinone) activity"/>
    <property type="evidence" value="ECO:0007669"/>
    <property type="project" value="InterPro"/>
</dbReference>
<dbReference type="GO" id="GO:0050136">
    <property type="term" value="F:NADH:ubiquinone reductase (non-electrogenic) activity"/>
    <property type="evidence" value="ECO:0007669"/>
    <property type="project" value="UniProtKB-UniRule"/>
</dbReference>
<dbReference type="GO" id="GO:0048038">
    <property type="term" value="F:quinone binding"/>
    <property type="evidence" value="ECO:0007669"/>
    <property type="project" value="UniProtKB-KW"/>
</dbReference>
<dbReference type="GO" id="GO:0009060">
    <property type="term" value="P:aerobic respiration"/>
    <property type="evidence" value="ECO:0007669"/>
    <property type="project" value="TreeGrafter"/>
</dbReference>
<dbReference type="GO" id="GO:0015990">
    <property type="term" value="P:electron transport coupled proton transport"/>
    <property type="evidence" value="ECO:0007669"/>
    <property type="project" value="TreeGrafter"/>
</dbReference>
<dbReference type="FunFam" id="3.40.50.12280:FF:000001">
    <property type="entry name" value="NADH-quinone oxidoreductase subunit B 2"/>
    <property type="match status" value="1"/>
</dbReference>
<dbReference type="Gene3D" id="3.40.50.12280">
    <property type="match status" value="1"/>
</dbReference>
<dbReference type="HAMAP" id="MF_01356">
    <property type="entry name" value="NDH1_NuoB"/>
    <property type="match status" value="1"/>
</dbReference>
<dbReference type="InterPro" id="IPR006137">
    <property type="entry name" value="NADH_UbQ_OxRdtase-like_20kDa"/>
</dbReference>
<dbReference type="InterPro" id="IPR006138">
    <property type="entry name" value="NADH_UQ_OxRdtase_20Kd_su"/>
</dbReference>
<dbReference type="NCBIfam" id="TIGR01957">
    <property type="entry name" value="nuoB_fam"/>
    <property type="match status" value="1"/>
</dbReference>
<dbReference type="NCBIfam" id="NF005012">
    <property type="entry name" value="PRK06411.1"/>
    <property type="match status" value="1"/>
</dbReference>
<dbReference type="PANTHER" id="PTHR11995">
    <property type="entry name" value="NADH DEHYDROGENASE"/>
    <property type="match status" value="1"/>
</dbReference>
<dbReference type="PANTHER" id="PTHR11995:SF14">
    <property type="entry name" value="NADH DEHYDROGENASE [UBIQUINONE] IRON-SULFUR PROTEIN 7, MITOCHONDRIAL"/>
    <property type="match status" value="1"/>
</dbReference>
<dbReference type="Pfam" id="PF01058">
    <property type="entry name" value="Oxidored_q6"/>
    <property type="match status" value="1"/>
</dbReference>
<dbReference type="SUPFAM" id="SSF56770">
    <property type="entry name" value="HydA/Nqo6-like"/>
    <property type="match status" value="1"/>
</dbReference>
<dbReference type="PROSITE" id="PS01150">
    <property type="entry name" value="COMPLEX1_20K"/>
    <property type="match status" value="1"/>
</dbReference>
<feature type="chain" id="PRO_0000358368" description="NADH-quinone oxidoreductase subunit B">
    <location>
        <begin position="1"/>
        <end position="159"/>
    </location>
</feature>
<feature type="binding site" evidence="2">
    <location>
        <position position="37"/>
    </location>
    <ligand>
        <name>[4Fe-4S] cluster</name>
        <dbReference type="ChEBI" id="CHEBI:49883"/>
    </ligand>
</feature>
<feature type="binding site" evidence="2">
    <location>
        <position position="38"/>
    </location>
    <ligand>
        <name>[4Fe-4S] cluster</name>
        <dbReference type="ChEBI" id="CHEBI:49883"/>
    </ligand>
</feature>
<feature type="binding site" evidence="2">
    <location>
        <position position="102"/>
    </location>
    <ligand>
        <name>[4Fe-4S] cluster</name>
        <dbReference type="ChEBI" id="CHEBI:49883"/>
    </ligand>
</feature>
<feature type="binding site" evidence="2">
    <location>
        <position position="132"/>
    </location>
    <ligand>
        <name>[4Fe-4S] cluster</name>
        <dbReference type="ChEBI" id="CHEBI:49883"/>
    </ligand>
</feature>
<accession>B4E5M1</accession>
<sequence>MSIEGVLKEGFVTTTADKLINWTRTGSLWPMTFGLACCAVEMMHAGAARYDLDRFGVVFRPSPRQSDVMIVAGTLCNKMAPALRRVYDQMAEPRWVISMGSCANGGGYYHYSYSVVRGCDRIVPVDVYVPGCPPTAEALVYGVIQLQAKIRRTNTIARQ</sequence>
<protein>
    <recommendedName>
        <fullName evidence="2">NADH-quinone oxidoreductase subunit B</fullName>
        <ecNumber evidence="2">7.1.1.-</ecNumber>
    </recommendedName>
    <alternativeName>
        <fullName evidence="2">NADH dehydrogenase I subunit B</fullName>
    </alternativeName>
    <alternativeName>
        <fullName evidence="2">NDH-1 subunit B</fullName>
    </alternativeName>
</protein>
<proteinExistence type="inferred from homology"/>
<name>NUOB_BURCJ</name>
<reference key="1">
    <citation type="journal article" date="2009" name="J. Bacteriol.">
        <title>The genome of Burkholderia cenocepacia J2315, an epidemic pathogen of cystic fibrosis patients.</title>
        <authorList>
            <person name="Holden M.T."/>
            <person name="Seth-Smith H.M."/>
            <person name="Crossman L.C."/>
            <person name="Sebaihia M."/>
            <person name="Bentley S.D."/>
            <person name="Cerdeno-Tarraga A.M."/>
            <person name="Thomson N.R."/>
            <person name="Bason N."/>
            <person name="Quail M.A."/>
            <person name="Sharp S."/>
            <person name="Cherevach I."/>
            <person name="Churcher C."/>
            <person name="Goodhead I."/>
            <person name="Hauser H."/>
            <person name="Holroyd N."/>
            <person name="Mungall K."/>
            <person name="Scott P."/>
            <person name="Walker D."/>
            <person name="White B."/>
            <person name="Rose H."/>
            <person name="Iversen P."/>
            <person name="Mil-Homens D."/>
            <person name="Rocha E.P."/>
            <person name="Fialho A.M."/>
            <person name="Baldwin A."/>
            <person name="Dowson C."/>
            <person name="Barrell B.G."/>
            <person name="Govan J.R."/>
            <person name="Vandamme P."/>
            <person name="Hart C.A."/>
            <person name="Mahenthiralingam E."/>
            <person name="Parkhill J."/>
        </authorList>
    </citation>
    <scope>NUCLEOTIDE SEQUENCE [LARGE SCALE GENOMIC DNA]</scope>
    <source>
        <strain>ATCC BAA-245 / DSM 16553 / LMG 16656 / NCTC 13227 / J2315 / CF5610</strain>
    </source>
</reference>